<accession>P15059</accession>
<accession>Q76ZL0</accession>
<organism>
    <name type="scientific">Vaccinia virus (strain Western Reserve)</name>
    <name type="common">VACV</name>
    <name type="synonym">Vaccinia virus (strain WR)</name>
    <dbReference type="NCBI Taxonomy" id="10254"/>
    <lineage>
        <taxon>Viruses</taxon>
        <taxon>Varidnaviria</taxon>
        <taxon>Bamfordvirae</taxon>
        <taxon>Nucleocytoviricota</taxon>
        <taxon>Pokkesviricetes</taxon>
        <taxon>Chitovirales</taxon>
        <taxon>Poxviridae</taxon>
        <taxon>Chordopoxvirinae</taxon>
        <taxon>Orthopoxvirus</taxon>
        <taxon>Vaccinia virus</taxon>
    </lineage>
</organism>
<comment type="function">
    <text evidence="2 3 5 6">Viral serpin that inhibits both cysteine and serine proteinases involved in the regulation of host inflammatory and apoptosis processes (PubMed:25090990). Major anti-apoptotic protein which inhibits both intrinsic and extrinsic pathways and strongly cleaves host CASP1 and CASP8 but is a rather poor inhibitor of host CASP3 (PubMed:25090990). Prevents the proteolytic activity of host interleukin-1-beta converting enzyme (ICE) and ICE-like enzymes (PubMed:9049422). Can also block apoptosis through host tumor necrosis factor (TNF) receptor (PubMed:9049422). The inhibition of host ICE is an example of a 'cross-class' interaction, in which a serpin inhibits a non-serine proteinase. Also inhibits granzyme B (By similarity).</text>
</comment>
<comment type="subcellular location">
    <subcellularLocation>
        <location evidence="7">Host cytoplasm</location>
    </subcellularLocation>
</comment>
<comment type="induction">
    <text evidence="4">Expressed in the early phase of the viral replicative cycle.</text>
</comment>
<comment type="similarity">
    <text evidence="7">Belongs to the serpin family. Poxviruses subfamily.</text>
</comment>
<organismHost>
    <name type="scientific">Bos taurus</name>
    <name type="common">Bovine</name>
    <dbReference type="NCBI Taxonomy" id="9913"/>
</organismHost>
<sequence length="345" mass="38537">MDIFREIASSMKGENVFISPASISSVLTILYYGANGSTAEQLSKYVEKEENMDKVSAQNISFKSINKVYGRYSAVFKDSFLRKIGDKFQTVDFTDCRTIDAINKCVDIFTEGKINPLLDEPLSPDTCLLAISAVYFKAKWLTPFEKEFTSDYPFYVSPTEMVDVSMMSMYGKAFNHASVKESFGNFSIIELPYVGDTSMMVILPDKIDGLESIEQNLTDTNFKKWCNSLEATFIDVHIPKFKVTGSYNLVDTLVKSGLTEVFGSTGDYSNMCNSDVSVDAMIHKTYIDVNEEYTEAAAATCALVSDCASTITNEFCVDHPFIYVIRHVDGKILFVGRYCSPTTNC</sequence>
<proteinExistence type="evidence at transcript level"/>
<reference key="1">
    <citation type="journal article" date="1991" name="J. Gen. Virol.">
        <title>Nucleotide sequence of 42 kbp of vaccinia virus strain WR from near the right inverted terminal repeat.</title>
        <authorList>
            <person name="Smith G.L."/>
            <person name="Chan Y.S."/>
            <person name="Howard S.T."/>
        </authorList>
    </citation>
    <scope>NUCLEOTIDE SEQUENCE [GENOMIC DNA]</scope>
</reference>
<reference key="2">
    <citation type="journal article" date="1989" name="J. Virol.">
        <title>Vaccinia virus encodes two proteins that are structurally related to members of the plasma serine protease inhibitor superfamily.</title>
        <authorList>
            <person name="Kotwal G.J."/>
            <person name="Moss B."/>
        </authorList>
    </citation>
    <scope>NUCLEOTIDE SEQUENCE [GENOMIC DNA]</scope>
</reference>
<reference key="3">
    <citation type="journal article" date="1989" name="J. Gen. Virol.">
        <title>Vaccinia virus encodes a family of genes with homology to serine proteinase inhibitors.</title>
        <authorList>
            <person name="Smith G.L."/>
            <person name="Howard S.T."/>
            <person name="Chan Y.S."/>
        </authorList>
    </citation>
    <scope>NUCLEOTIDE SEQUENCE [GENOMIC DNA]</scope>
</reference>
<reference key="4">
    <citation type="submission" date="2003-02" db="EMBL/GenBank/DDBJ databases">
        <title>Sequencing of the coding region of Vaccinia-WR to an average 9-fold redundancy and an error rate of 0.16/10kb.</title>
        <authorList>
            <person name="Esposito J.J."/>
            <person name="Frace A.M."/>
            <person name="Sammons S.A."/>
            <person name="Olsen-Rasmussen M."/>
            <person name="Osborne J."/>
            <person name="Wohlhueter R."/>
        </authorList>
    </citation>
    <scope>NUCLEOTIDE SEQUENCE [LARGE SCALE GENOMIC DNA]</scope>
</reference>
<reference key="5">
    <citation type="journal article" date="1995" name="Virology">
        <title>Vaccinia virus serpins B13R (SPI-2) and B22R (SPI-1) encode M(r) 38.5 and 40K, intracellular polypeptides that do not affect virus virulence in a murine intranasal model.</title>
        <authorList>
            <person name="Kettle S."/>
            <person name="Blake N.W."/>
            <person name="Law K.M."/>
            <person name="Smith G.L."/>
        </authorList>
    </citation>
    <scope>INDUCTION</scope>
</reference>
<reference key="6">
    <citation type="journal article" date="1996" name="J. Virol.">
        <title>Protection against apoptosis by the vaccinia virus SPI-2 (B13R) gene product.</title>
        <authorList>
            <person name="Dobbelstein M."/>
            <person name="Shenk T."/>
        </authorList>
    </citation>
    <scope>FUNCTION</scope>
</reference>
<reference key="7">
    <citation type="journal article" date="1997" name="J. Gen. Virol.">
        <title>Vaccinia virus serpin B13R (SPI-2) inhibits interleukin-1beta-converting enzyme and protects virus-infected cells from TNF- and Fas-mediated apoptosis, but does not prevent IL-1beta-induced fever.</title>
        <authorList>
            <person name="Kettle S."/>
            <person name="Alcami A."/>
            <person name="Khanna A."/>
            <person name="Ehret R."/>
            <person name="Jassoy C."/>
            <person name="Smith G.L."/>
        </authorList>
    </citation>
    <scope>FUNCTION</scope>
</reference>
<reference key="8">
    <citation type="journal article" date="2014" name="J. Gen. Virol.">
        <title>Analysis of the anti-apoptotic activity of four vaccinia virus proteins demonstrates that B13 is the most potent inhibitor in isolation and during viral infection.</title>
        <authorList>
            <person name="Veyer D.L."/>
            <person name="Maluquer de Motes C."/>
            <person name="Sumner R.P."/>
            <person name="Ludwig L."/>
            <person name="Johnson B.F."/>
            <person name="Smith G.L."/>
        </authorList>
    </citation>
    <scope>FUNCTION</scope>
</reference>
<keyword id="KW-0244">Early protein</keyword>
<keyword id="KW-1035">Host cytoplasm</keyword>
<keyword id="KW-0945">Host-virus interaction</keyword>
<keyword id="KW-1085">Inhibition of host caspases by virus</keyword>
<keyword id="KW-1119">Modulation of host cell apoptosis by virus</keyword>
<keyword id="KW-0646">Protease inhibitor</keyword>
<keyword id="KW-1185">Reference proteome</keyword>
<keyword id="KW-0722">Serine protease inhibitor</keyword>
<evidence type="ECO:0000250" key="1"/>
<evidence type="ECO:0000250" key="2">
    <source>
        <dbReference type="UniProtKB" id="P07385"/>
    </source>
</evidence>
<evidence type="ECO:0000269" key="3">
    <source>
    </source>
</evidence>
<evidence type="ECO:0000269" key="4">
    <source>
    </source>
</evidence>
<evidence type="ECO:0000269" key="5">
    <source>
    </source>
</evidence>
<evidence type="ECO:0000269" key="6">
    <source>
    </source>
</evidence>
<evidence type="ECO:0000305" key="7"/>
<dbReference type="EMBL" id="D11079">
    <property type="protein sequence ID" value="BAA01843.1"/>
    <property type="molecule type" value="Genomic_DNA"/>
</dbReference>
<dbReference type="EMBL" id="M24218">
    <property type="protein sequence ID" value="AAA48346.1"/>
    <property type="molecule type" value="Genomic_DNA"/>
</dbReference>
<dbReference type="EMBL" id="D00581">
    <property type="protein sequence ID" value="BAA00458.1"/>
    <property type="molecule type" value="Genomic_DNA"/>
</dbReference>
<dbReference type="EMBL" id="AY243312">
    <property type="protein sequence ID" value="AAO89474.1"/>
    <property type="molecule type" value="Genomic_DNA"/>
</dbReference>
<dbReference type="PIR" id="A34035">
    <property type="entry name" value="WMVZW2"/>
</dbReference>
<dbReference type="RefSeq" id="YP_233077.1">
    <property type="nucleotide sequence ID" value="NC_006998.1"/>
</dbReference>
<dbReference type="SMR" id="P15059"/>
<dbReference type="IntAct" id="P15059">
    <property type="interactions" value="36"/>
</dbReference>
<dbReference type="MEROPS" id="I04.028"/>
<dbReference type="DNASU" id="3707572"/>
<dbReference type="GeneID" id="3707572"/>
<dbReference type="KEGG" id="vg:3707572"/>
<dbReference type="Reactome" id="R-HSA-5357905">
    <property type="pathway name" value="Regulation of TNFR1 signaling"/>
</dbReference>
<dbReference type="Reactome" id="R-HSA-9686347">
    <property type="pathway name" value="Microbial modulation of RIPK1-mediated regulated necrosis"/>
</dbReference>
<dbReference type="Proteomes" id="UP000000344">
    <property type="component" value="Genome"/>
</dbReference>
<dbReference type="GO" id="GO:0005615">
    <property type="term" value="C:extracellular space"/>
    <property type="evidence" value="ECO:0007669"/>
    <property type="project" value="InterPro"/>
</dbReference>
<dbReference type="GO" id="GO:0030430">
    <property type="term" value="C:host cell cytoplasm"/>
    <property type="evidence" value="ECO:0007669"/>
    <property type="project" value="UniProtKB-SubCell"/>
</dbReference>
<dbReference type="GO" id="GO:0004867">
    <property type="term" value="F:serine-type endopeptidase inhibitor activity"/>
    <property type="evidence" value="ECO:0007669"/>
    <property type="project" value="UniProtKB-KW"/>
</dbReference>
<dbReference type="GO" id="GO:0033668">
    <property type="term" value="P:symbiont-mediated suppression of host apoptosis"/>
    <property type="evidence" value="ECO:0007669"/>
    <property type="project" value="UniProtKB-KW"/>
</dbReference>
<dbReference type="CDD" id="cd19583">
    <property type="entry name" value="serpinN_SPI-1_SPI-2"/>
    <property type="match status" value="1"/>
</dbReference>
<dbReference type="FunFam" id="1.10.287.580:FF:000001">
    <property type="entry name" value="Serine proteinase inhibitor 2"/>
    <property type="match status" value="1"/>
</dbReference>
<dbReference type="Gene3D" id="2.30.39.10">
    <property type="entry name" value="Alpha-1-antitrypsin, domain 1"/>
    <property type="match status" value="1"/>
</dbReference>
<dbReference type="Gene3D" id="3.30.497.10">
    <property type="entry name" value="Antithrombin, subunit I, domain 2"/>
    <property type="match status" value="1"/>
</dbReference>
<dbReference type="Gene3D" id="1.10.287.580">
    <property type="entry name" value="Helix hairpin bin"/>
    <property type="match status" value="1"/>
</dbReference>
<dbReference type="InterPro" id="IPR023795">
    <property type="entry name" value="Serpin_CS"/>
</dbReference>
<dbReference type="InterPro" id="IPR023796">
    <property type="entry name" value="Serpin_dom"/>
</dbReference>
<dbReference type="InterPro" id="IPR000215">
    <property type="entry name" value="Serpin_fam"/>
</dbReference>
<dbReference type="InterPro" id="IPR036186">
    <property type="entry name" value="Serpin_sf"/>
</dbReference>
<dbReference type="InterPro" id="IPR042178">
    <property type="entry name" value="Serpin_sf_1"/>
</dbReference>
<dbReference type="InterPro" id="IPR042185">
    <property type="entry name" value="Serpin_sf_2"/>
</dbReference>
<dbReference type="PANTHER" id="PTHR11461:SF211">
    <property type="entry name" value="GH10112P-RELATED"/>
    <property type="match status" value="1"/>
</dbReference>
<dbReference type="PANTHER" id="PTHR11461">
    <property type="entry name" value="SERINE PROTEASE INHIBITOR, SERPIN"/>
    <property type="match status" value="1"/>
</dbReference>
<dbReference type="Pfam" id="PF00079">
    <property type="entry name" value="Serpin"/>
    <property type="match status" value="1"/>
</dbReference>
<dbReference type="SMART" id="SM00093">
    <property type="entry name" value="SERPIN"/>
    <property type="match status" value="1"/>
</dbReference>
<dbReference type="SUPFAM" id="SSF56574">
    <property type="entry name" value="Serpins"/>
    <property type="match status" value="1"/>
</dbReference>
<dbReference type="PROSITE" id="PS00284">
    <property type="entry name" value="SERPIN"/>
    <property type="match status" value="1"/>
</dbReference>
<name>SPI2_VACCW</name>
<feature type="chain" id="PRO_0000094144" description="Serine proteinase inhibitor 2">
    <location>
        <begin position="1"/>
        <end position="345"/>
    </location>
</feature>
<feature type="site" description="Reactive bond" evidence="1">
    <location>
        <begin position="306"/>
        <end position="307"/>
    </location>
</feature>
<protein>
    <recommendedName>
        <fullName>Serine proteinase inhibitor 2</fullName>
        <shortName>Serp-2</shortName>
        <shortName>Serpin-2</shortName>
    </recommendedName>
</protein>
<gene>
    <name type="primary">OPG199</name>
    <name type="synonym">SPI-2</name>
    <name type="ordered locus">VACWR195</name>
    <name type="ORF">B13R</name>
</gene>